<accession>Q68W11</accession>
<protein>
    <recommendedName>
        <fullName>ADP,ATP carrier protein 5</fullName>
    </recommendedName>
    <alternativeName>
        <fullName>ADP/ATP translocase 5</fullName>
    </alternativeName>
</protein>
<keyword id="KW-0067">ATP-binding</keyword>
<keyword id="KW-1003">Cell membrane</keyword>
<keyword id="KW-0472">Membrane</keyword>
<keyword id="KW-0547">Nucleotide-binding</keyword>
<keyword id="KW-0812">Transmembrane</keyword>
<keyword id="KW-1133">Transmembrane helix</keyword>
<keyword id="KW-0813">Transport</keyword>
<feature type="chain" id="PRO_0000286480" description="ADP,ATP carrier protein 5">
    <location>
        <begin position="1"/>
        <end position="500"/>
    </location>
</feature>
<feature type="transmembrane region" description="Helical" evidence="2">
    <location>
        <begin position="26"/>
        <end position="46"/>
    </location>
</feature>
<feature type="transmembrane region" description="Helical" evidence="2">
    <location>
        <begin position="62"/>
        <end position="82"/>
    </location>
</feature>
<feature type="transmembrane region" description="Helical" evidence="2">
    <location>
        <begin position="94"/>
        <end position="114"/>
    </location>
</feature>
<feature type="transmembrane region" description="Helical" evidence="2">
    <location>
        <begin position="149"/>
        <end position="169"/>
    </location>
</feature>
<feature type="transmembrane region" description="Helical" evidence="2">
    <location>
        <begin position="184"/>
        <end position="204"/>
    </location>
</feature>
<feature type="transmembrane region" description="Helical" evidence="2">
    <location>
        <begin position="224"/>
        <end position="244"/>
    </location>
</feature>
<feature type="transmembrane region" description="Helical" evidence="2">
    <location>
        <begin position="287"/>
        <end position="307"/>
    </location>
</feature>
<feature type="transmembrane region" description="Helical" evidence="2">
    <location>
        <begin position="328"/>
        <end position="348"/>
    </location>
</feature>
<feature type="transmembrane region" description="Helical" evidence="2">
    <location>
        <begin position="357"/>
        <end position="377"/>
    </location>
</feature>
<feature type="transmembrane region" description="Helical" evidence="2">
    <location>
        <begin position="381"/>
        <end position="401"/>
    </location>
</feature>
<feature type="transmembrane region" description="Helical" evidence="2">
    <location>
        <begin position="469"/>
        <end position="489"/>
    </location>
</feature>
<reference key="1">
    <citation type="journal article" date="2004" name="J. Bacteriol.">
        <title>Complete genome sequence of Rickettsia typhi and comparison with sequences of other Rickettsiae.</title>
        <authorList>
            <person name="McLeod M.P."/>
            <person name="Qin X."/>
            <person name="Karpathy S.E."/>
            <person name="Gioia J."/>
            <person name="Highlander S.K."/>
            <person name="Fox G.E."/>
            <person name="McNeill T.Z."/>
            <person name="Jiang H."/>
            <person name="Muzny D."/>
            <person name="Jacob L.S."/>
            <person name="Hawes A.C."/>
            <person name="Sodergren E."/>
            <person name="Gill R."/>
            <person name="Hume J."/>
            <person name="Morgan M."/>
            <person name="Fan G."/>
            <person name="Amin A.G."/>
            <person name="Gibbs R.A."/>
            <person name="Hong C."/>
            <person name="Yu X.-J."/>
            <person name="Walker D.H."/>
            <person name="Weinstock G.M."/>
        </authorList>
    </citation>
    <scope>NUCLEOTIDE SEQUENCE [LARGE SCALE GENOMIC DNA]</scope>
    <source>
        <strain>ATCC VR-144 / Wilmington</strain>
    </source>
</reference>
<sequence>MLSTSQSRSFKNKFRAAFWPVHNYELGKFIPISALMFCILFNQNILRILKDSILISEISAEIAGFAKVYCVTPVAALFVIIYAKMINHLTFEKIFYYLSAFFISCFILFAFVIYPNIHIFHVHPDTLSDWMNKYPHFKWYISLVGNWGYIVYYSLAELWPNIFYVLLFWQFTNELTTTEEAKRFYTLFSLFGNSSLILVGFLMMNLSSEDTIIKKFVSISDSKITLVQVSTTIVAIVAIICCLLVRFISKYIFTNPLFYAKIKKSRSTTQRMGLIKSFKYIAKSKYLWLLLICSAAFGFAINLVEAVWKAKIKELYPTVNTYAEFNSLYILWTGVAIIVMTIIGNNVMRMHNWFVAAVISPVIIMVTGILFFVLIVFDQQILSLFDGAILMSPLALAVSIGGIQNILAKGTKYSIWDTSREMLYIPLDDELKTKGKAAVDVISAKIGKSSSGLVQSIIFTLVPNATFTSISPILMVVFTFVCFAWIYAVRKIYFEYQKIT</sequence>
<gene>
    <name type="primary">tlcE</name>
    <name type="synonym">tlc5</name>
    <name type="ordered locus">RT0724</name>
</gene>
<dbReference type="EMBL" id="AE017197">
    <property type="protein sequence ID" value="AAU04181.1"/>
    <property type="molecule type" value="Genomic_DNA"/>
</dbReference>
<dbReference type="RefSeq" id="WP_011191157.1">
    <property type="nucleotide sequence ID" value="NC_006142.1"/>
</dbReference>
<dbReference type="KEGG" id="rty:RT0724"/>
<dbReference type="eggNOG" id="COG3202">
    <property type="taxonomic scope" value="Bacteria"/>
</dbReference>
<dbReference type="HOGENOM" id="CLU_023964_0_1_5"/>
<dbReference type="OrthoDB" id="19786at2"/>
<dbReference type="Proteomes" id="UP000000604">
    <property type="component" value="Chromosome"/>
</dbReference>
<dbReference type="GO" id="GO:0005886">
    <property type="term" value="C:plasma membrane"/>
    <property type="evidence" value="ECO:0007669"/>
    <property type="project" value="UniProtKB-SubCell"/>
</dbReference>
<dbReference type="GO" id="GO:0005524">
    <property type="term" value="F:ATP binding"/>
    <property type="evidence" value="ECO:0007669"/>
    <property type="project" value="UniProtKB-KW"/>
</dbReference>
<dbReference type="GO" id="GO:0005471">
    <property type="term" value="F:ATP:ADP antiporter activity"/>
    <property type="evidence" value="ECO:0007669"/>
    <property type="project" value="InterPro"/>
</dbReference>
<dbReference type="InterPro" id="IPR004667">
    <property type="entry name" value="ADP_ATP_car_bac_type"/>
</dbReference>
<dbReference type="NCBIfam" id="TIGR00769">
    <property type="entry name" value="AAA"/>
    <property type="match status" value="1"/>
</dbReference>
<dbReference type="PANTHER" id="PTHR31187">
    <property type="match status" value="1"/>
</dbReference>
<dbReference type="PANTHER" id="PTHR31187:SF1">
    <property type="entry name" value="ADP,ATP CARRIER PROTEIN 1"/>
    <property type="match status" value="1"/>
</dbReference>
<dbReference type="Pfam" id="PF03219">
    <property type="entry name" value="TLC"/>
    <property type="match status" value="1"/>
</dbReference>
<comment type="function">
    <text evidence="1">Provides the rickettsial cell with host ATP in exchange for rickettsial ADP. This is an obligate exchange system. This energy acquiring activity is an important component of rickettsial parasitism (By similarity).</text>
</comment>
<comment type="subcellular location">
    <subcellularLocation>
        <location>Cell membrane</location>
        <topology>Multi-pass membrane protein</topology>
    </subcellularLocation>
</comment>
<comment type="similarity">
    <text evidence="3">Belongs to the ADP/ATP translocase tlc family.</text>
</comment>
<proteinExistence type="inferred from homology"/>
<organism>
    <name type="scientific">Rickettsia typhi (strain ATCC VR-144 / Wilmington)</name>
    <dbReference type="NCBI Taxonomy" id="257363"/>
    <lineage>
        <taxon>Bacteria</taxon>
        <taxon>Pseudomonadati</taxon>
        <taxon>Pseudomonadota</taxon>
        <taxon>Alphaproteobacteria</taxon>
        <taxon>Rickettsiales</taxon>
        <taxon>Rickettsiaceae</taxon>
        <taxon>Rickettsieae</taxon>
        <taxon>Rickettsia</taxon>
        <taxon>typhus group</taxon>
    </lineage>
</organism>
<evidence type="ECO:0000250" key="1"/>
<evidence type="ECO:0000255" key="2"/>
<evidence type="ECO:0000305" key="3"/>
<name>TLCE_RICTY</name>